<accession>B2A1G7</accession>
<dbReference type="EC" id="2.5.1.61" evidence="1"/>
<dbReference type="EMBL" id="CP001034">
    <property type="protein sequence ID" value="ACB84707.1"/>
    <property type="molecule type" value="Genomic_DNA"/>
</dbReference>
<dbReference type="RefSeq" id="WP_012447582.1">
    <property type="nucleotide sequence ID" value="NC_010718.1"/>
</dbReference>
<dbReference type="SMR" id="B2A1G7"/>
<dbReference type="FunCoup" id="B2A1G7">
    <property type="interactions" value="424"/>
</dbReference>
<dbReference type="STRING" id="457570.Nther_1124"/>
<dbReference type="KEGG" id="nth:Nther_1124"/>
<dbReference type="eggNOG" id="COG0181">
    <property type="taxonomic scope" value="Bacteria"/>
</dbReference>
<dbReference type="HOGENOM" id="CLU_019704_0_2_9"/>
<dbReference type="InParanoid" id="B2A1G7"/>
<dbReference type="UniPathway" id="UPA00251">
    <property type="reaction ID" value="UER00319"/>
</dbReference>
<dbReference type="Proteomes" id="UP000001683">
    <property type="component" value="Chromosome"/>
</dbReference>
<dbReference type="GO" id="GO:0005737">
    <property type="term" value="C:cytoplasm"/>
    <property type="evidence" value="ECO:0007669"/>
    <property type="project" value="TreeGrafter"/>
</dbReference>
<dbReference type="GO" id="GO:0004418">
    <property type="term" value="F:hydroxymethylbilane synthase activity"/>
    <property type="evidence" value="ECO:0007669"/>
    <property type="project" value="UniProtKB-UniRule"/>
</dbReference>
<dbReference type="GO" id="GO:0006782">
    <property type="term" value="P:protoporphyrinogen IX biosynthetic process"/>
    <property type="evidence" value="ECO:0007669"/>
    <property type="project" value="UniProtKB-UniRule"/>
</dbReference>
<dbReference type="CDD" id="cd13646">
    <property type="entry name" value="PBP2_EcHMBS_like"/>
    <property type="match status" value="1"/>
</dbReference>
<dbReference type="FunFam" id="3.40.190.10:FF:000004">
    <property type="entry name" value="Porphobilinogen deaminase"/>
    <property type="match status" value="1"/>
</dbReference>
<dbReference type="FunFam" id="3.40.190.10:FF:000005">
    <property type="entry name" value="Porphobilinogen deaminase"/>
    <property type="match status" value="1"/>
</dbReference>
<dbReference type="Gene3D" id="3.40.190.10">
    <property type="entry name" value="Periplasmic binding protein-like II"/>
    <property type="match status" value="2"/>
</dbReference>
<dbReference type="Gene3D" id="3.30.160.40">
    <property type="entry name" value="Porphobilinogen deaminase, C-terminal domain"/>
    <property type="match status" value="1"/>
</dbReference>
<dbReference type="HAMAP" id="MF_00260">
    <property type="entry name" value="Porphobil_deam"/>
    <property type="match status" value="1"/>
</dbReference>
<dbReference type="InterPro" id="IPR000860">
    <property type="entry name" value="HemC"/>
</dbReference>
<dbReference type="InterPro" id="IPR022419">
    <property type="entry name" value="Porphobilin_deaminase_cofac_BS"/>
</dbReference>
<dbReference type="InterPro" id="IPR022417">
    <property type="entry name" value="Porphobilin_deaminase_N"/>
</dbReference>
<dbReference type="InterPro" id="IPR022418">
    <property type="entry name" value="Porphobilinogen_deaminase_C"/>
</dbReference>
<dbReference type="InterPro" id="IPR036803">
    <property type="entry name" value="Porphobilinogen_deaminase_C_sf"/>
</dbReference>
<dbReference type="NCBIfam" id="TIGR00212">
    <property type="entry name" value="hemC"/>
    <property type="match status" value="1"/>
</dbReference>
<dbReference type="PANTHER" id="PTHR11557">
    <property type="entry name" value="PORPHOBILINOGEN DEAMINASE"/>
    <property type="match status" value="1"/>
</dbReference>
<dbReference type="PANTHER" id="PTHR11557:SF0">
    <property type="entry name" value="PORPHOBILINOGEN DEAMINASE"/>
    <property type="match status" value="1"/>
</dbReference>
<dbReference type="Pfam" id="PF01379">
    <property type="entry name" value="Porphobil_deam"/>
    <property type="match status" value="1"/>
</dbReference>
<dbReference type="Pfam" id="PF03900">
    <property type="entry name" value="Porphobil_deamC"/>
    <property type="match status" value="1"/>
</dbReference>
<dbReference type="PIRSF" id="PIRSF001438">
    <property type="entry name" value="4pyrrol_synth_OHMeBilane_synth"/>
    <property type="match status" value="1"/>
</dbReference>
<dbReference type="PRINTS" id="PR00151">
    <property type="entry name" value="PORPHBDMNASE"/>
</dbReference>
<dbReference type="SUPFAM" id="SSF53850">
    <property type="entry name" value="Periplasmic binding protein-like II"/>
    <property type="match status" value="1"/>
</dbReference>
<dbReference type="SUPFAM" id="SSF54782">
    <property type="entry name" value="Porphobilinogen deaminase (hydroxymethylbilane synthase), C-terminal domain"/>
    <property type="match status" value="1"/>
</dbReference>
<dbReference type="PROSITE" id="PS00533">
    <property type="entry name" value="PORPHOBILINOGEN_DEAM"/>
    <property type="match status" value="1"/>
</dbReference>
<protein>
    <recommendedName>
        <fullName evidence="1">Porphobilinogen deaminase</fullName>
        <shortName evidence="1">PBG</shortName>
        <ecNumber evidence="1">2.5.1.61</ecNumber>
    </recommendedName>
    <alternativeName>
        <fullName evidence="1">Hydroxymethylbilane synthase</fullName>
        <shortName evidence="1">HMBS</shortName>
    </alternativeName>
    <alternativeName>
        <fullName evidence="1">Pre-uroporphyrinogen synthase</fullName>
    </alternativeName>
</protein>
<gene>
    <name evidence="1" type="primary">hemC</name>
    <name type="ordered locus">Nther_1124</name>
</gene>
<reference key="1">
    <citation type="submission" date="2008-04" db="EMBL/GenBank/DDBJ databases">
        <title>Complete sequence of chromosome of Natranaerobius thermophilus JW/NM-WN-LF.</title>
        <authorList>
            <consortium name="US DOE Joint Genome Institute"/>
            <person name="Copeland A."/>
            <person name="Lucas S."/>
            <person name="Lapidus A."/>
            <person name="Glavina del Rio T."/>
            <person name="Dalin E."/>
            <person name="Tice H."/>
            <person name="Bruce D."/>
            <person name="Goodwin L."/>
            <person name="Pitluck S."/>
            <person name="Chertkov O."/>
            <person name="Brettin T."/>
            <person name="Detter J.C."/>
            <person name="Han C."/>
            <person name="Kuske C.R."/>
            <person name="Schmutz J."/>
            <person name="Larimer F."/>
            <person name="Land M."/>
            <person name="Hauser L."/>
            <person name="Kyrpides N."/>
            <person name="Lykidis A."/>
            <person name="Mesbah N.M."/>
            <person name="Wiegel J."/>
        </authorList>
    </citation>
    <scope>NUCLEOTIDE SEQUENCE [LARGE SCALE GENOMIC DNA]</scope>
    <source>
        <strain>ATCC BAA-1301 / DSM 18059 / JW/NM-WN-LF</strain>
    </source>
</reference>
<evidence type="ECO:0000255" key="1">
    <source>
        <dbReference type="HAMAP-Rule" id="MF_00260"/>
    </source>
</evidence>
<comment type="function">
    <text evidence="1">Tetrapolymerization of the monopyrrole PBG into the hydroxymethylbilane pre-uroporphyrinogen in several discrete steps.</text>
</comment>
<comment type="catalytic activity">
    <reaction evidence="1">
        <text>4 porphobilinogen + H2O = hydroxymethylbilane + 4 NH4(+)</text>
        <dbReference type="Rhea" id="RHEA:13185"/>
        <dbReference type="ChEBI" id="CHEBI:15377"/>
        <dbReference type="ChEBI" id="CHEBI:28938"/>
        <dbReference type="ChEBI" id="CHEBI:57845"/>
        <dbReference type="ChEBI" id="CHEBI:58126"/>
        <dbReference type="EC" id="2.5.1.61"/>
    </reaction>
</comment>
<comment type="cofactor">
    <cofactor evidence="1">
        <name>dipyrromethane</name>
        <dbReference type="ChEBI" id="CHEBI:60342"/>
    </cofactor>
    <text evidence="1">Binds 1 dipyrromethane group covalently.</text>
</comment>
<comment type="pathway">
    <text evidence="1">Porphyrin-containing compound metabolism; protoporphyrin-IX biosynthesis; coproporphyrinogen-III from 5-aminolevulinate: step 2/4.</text>
</comment>
<comment type="subunit">
    <text evidence="1">Monomer.</text>
</comment>
<comment type="miscellaneous">
    <text evidence="1">The porphobilinogen subunits are added to the dipyrromethane group.</text>
</comment>
<comment type="similarity">
    <text evidence="1">Belongs to the HMBS family.</text>
</comment>
<organism>
    <name type="scientific">Natranaerobius thermophilus (strain ATCC BAA-1301 / DSM 18059 / JW/NM-WN-LF)</name>
    <dbReference type="NCBI Taxonomy" id="457570"/>
    <lineage>
        <taxon>Bacteria</taxon>
        <taxon>Bacillati</taxon>
        <taxon>Bacillota</taxon>
        <taxon>Clostridia</taxon>
        <taxon>Natranaerobiales</taxon>
        <taxon>Natranaerobiaceae</taxon>
        <taxon>Natranaerobius</taxon>
    </lineage>
</organism>
<proteinExistence type="inferred from homology"/>
<name>HEM3_NATTJ</name>
<keyword id="KW-0627">Porphyrin biosynthesis</keyword>
<keyword id="KW-1185">Reference proteome</keyword>
<keyword id="KW-0808">Transferase</keyword>
<sequence>MKLRIGTRRSQLALDQTNWVVEQLKTHYPDIEIEIKKIETKGDQLLNVSLSKVGGKGLFLKEIQNALLQGEIDLAVHSMKDIPTETTEDLEICAITKRVDPLDALISNNDITIDELPENAKIGTSSLRRGSQLKAYRNDLQIIPIRGNINTRMNKLQELPELDAVVLAKAGLVRSGMTDSISQNISPEIIVPCPGQGALGLEIRHDNENLKEKLAVLDDSESRKAIGAERAFLNRLGGSCHVPVGAYAEIISNELHLTGVVASEDGQDVIKRSVQTHLSDNNKIPSTLGNDLAEELIELGANKILSELKEG</sequence>
<feature type="chain" id="PRO_1000114165" description="Porphobilinogen deaminase">
    <location>
        <begin position="1"/>
        <end position="311"/>
    </location>
</feature>
<feature type="modified residue" description="S-(dipyrrolylmethanemethyl)cysteine" evidence="1">
    <location>
        <position position="240"/>
    </location>
</feature>